<comment type="function">
    <text evidence="1">Catalyzes the attachment of threonine to tRNA(Thr) in a two-step reaction: L-threonine is first activated by ATP to form Thr-AMP and then transferred to the acceptor end of tRNA(Thr). Also edits incorrectly charged L-seryl-tRNA(Thr).</text>
</comment>
<comment type="catalytic activity">
    <reaction evidence="1">
        <text>tRNA(Thr) + L-threonine + ATP = L-threonyl-tRNA(Thr) + AMP + diphosphate + H(+)</text>
        <dbReference type="Rhea" id="RHEA:24624"/>
        <dbReference type="Rhea" id="RHEA-COMP:9670"/>
        <dbReference type="Rhea" id="RHEA-COMP:9704"/>
        <dbReference type="ChEBI" id="CHEBI:15378"/>
        <dbReference type="ChEBI" id="CHEBI:30616"/>
        <dbReference type="ChEBI" id="CHEBI:33019"/>
        <dbReference type="ChEBI" id="CHEBI:57926"/>
        <dbReference type="ChEBI" id="CHEBI:78442"/>
        <dbReference type="ChEBI" id="CHEBI:78534"/>
        <dbReference type="ChEBI" id="CHEBI:456215"/>
        <dbReference type="EC" id="6.1.1.3"/>
    </reaction>
</comment>
<comment type="cofactor">
    <cofactor evidence="1">
        <name>Zn(2+)</name>
        <dbReference type="ChEBI" id="CHEBI:29105"/>
    </cofactor>
    <text evidence="1">Binds 1 zinc ion per subunit.</text>
</comment>
<comment type="subunit">
    <text evidence="1">Homodimer.</text>
</comment>
<comment type="subcellular location">
    <subcellularLocation>
        <location evidence="1">Cytoplasm</location>
    </subcellularLocation>
</comment>
<comment type="similarity">
    <text evidence="1">Belongs to the class-II aminoacyl-tRNA synthetase family.</text>
</comment>
<accession>Q8P234</accession>
<feature type="chain" id="PRO_0000101065" description="Threonine--tRNA ligase">
    <location>
        <begin position="1"/>
        <end position="647"/>
    </location>
</feature>
<feature type="domain" description="TGS" evidence="2">
    <location>
        <begin position="1"/>
        <end position="61"/>
    </location>
</feature>
<feature type="region of interest" description="Catalytic" evidence="1">
    <location>
        <begin position="240"/>
        <end position="538"/>
    </location>
</feature>
<feature type="binding site" evidence="1">
    <location>
        <position position="334"/>
    </location>
    <ligand>
        <name>Zn(2+)</name>
        <dbReference type="ChEBI" id="CHEBI:29105"/>
    </ligand>
</feature>
<feature type="binding site" evidence="1">
    <location>
        <position position="385"/>
    </location>
    <ligand>
        <name>Zn(2+)</name>
        <dbReference type="ChEBI" id="CHEBI:29105"/>
    </ligand>
</feature>
<feature type="binding site" evidence="1">
    <location>
        <position position="515"/>
    </location>
    <ligand>
        <name>Zn(2+)</name>
        <dbReference type="ChEBI" id="CHEBI:29105"/>
    </ligand>
</feature>
<sequence length="647" mass="74275">MIKITFPDGAVREFESGVTTFDIAESISKSLAKKALAGKFNDQLIDTTRAIEEDGSIEIVTPDHKDAYEVLRHSAAHLFAQAAKRLFPNLHLGVGPAIAEGFYYDTDNAEGQISNEDLPRIEAEMQKIVTENYPCIREEVTKEEALELFKDDPYKVELINEHAGAGLTVYRQGEFVDLCRGPHVPSTGRIQVFHLLNVAGAYWRGNSDNNMMQRIYGTAWFDKKDLKAYLTRLEEAKERDHRKLGKELDLFMISQEVGQGLPFWLPDGATIRRTLERYITDKELASGYQHVYTPPLASVELYKTSGHWDHYQEDMFPVMDMGDGEEFVLRPMNCPHHIQVYKNHVRSYRELPIRIAELGMMHRYEKSGALSGLQRVREMTLNDGHIFVTPEQIQEEFQRALQLIIDVYADFNLTDYRFRLSYRDPNDTHKYYDNDEMWENAQSMLKAALDEMGVDYFEAEGEAAFYGPKLDIQVKTALGNEETLSTIQLDFLLPERFDLKYIGADGEEHRPVMIHRGVISTMERFTAILIETYKGAFPTWLAPHQVTVIPISNEAHIDYAWEVAKTLRDRGVRADVDDRNEKMQYKIRASQTSKIPYQLIVGDKEMEDKSVNVRRYGSKATHTESVEEFVENILADIARKSRPDAQA</sequence>
<gene>
    <name evidence="1" type="primary">thrS</name>
    <name type="ordered locus">spyM18_0576</name>
</gene>
<reference key="1">
    <citation type="journal article" date="2002" name="Proc. Natl. Acad. Sci. U.S.A.">
        <title>Genome sequence and comparative microarray analysis of serotype M18 group A Streptococcus strains associated with acute rheumatic fever outbreaks.</title>
        <authorList>
            <person name="Smoot J.C."/>
            <person name="Barbian K.D."/>
            <person name="Van Gompel J.J."/>
            <person name="Smoot L.M."/>
            <person name="Chaussee M.S."/>
            <person name="Sylva G.L."/>
            <person name="Sturdevant D.E."/>
            <person name="Ricklefs S.M."/>
            <person name="Porcella S.F."/>
            <person name="Parkins L.D."/>
            <person name="Beres S.B."/>
            <person name="Campbell D.S."/>
            <person name="Smith T.M."/>
            <person name="Zhang Q."/>
            <person name="Kapur V."/>
            <person name="Daly J.A."/>
            <person name="Veasy L.G."/>
            <person name="Musser J.M."/>
        </authorList>
    </citation>
    <scope>NUCLEOTIDE SEQUENCE [LARGE SCALE GENOMIC DNA]</scope>
    <source>
        <strain>MGAS8232</strain>
    </source>
</reference>
<proteinExistence type="inferred from homology"/>
<dbReference type="EC" id="6.1.1.3" evidence="1"/>
<dbReference type="EMBL" id="AE009949">
    <property type="protein sequence ID" value="AAL97270.1"/>
    <property type="molecule type" value="Genomic_DNA"/>
</dbReference>
<dbReference type="RefSeq" id="WP_002985672.1">
    <property type="nucleotide sequence ID" value="NC_003485.1"/>
</dbReference>
<dbReference type="SMR" id="Q8P234"/>
<dbReference type="KEGG" id="spm:spyM18_0576"/>
<dbReference type="HOGENOM" id="CLU_008554_0_1_9"/>
<dbReference type="GO" id="GO:0005737">
    <property type="term" value="C:cytoplasm"/>
    <property type="evidence" value="ECO:0007669"/>
    <property type="project" value="UniProtKB-SubCell"/>
</dbReference>
<dbReference type="GO" id="GO:0005524">
    <property type="term" value="F:ATP binding"/>
    <property type="evidence" value="ECO:0007669"/>
    <property type="project" value="UniProtKB-UniRule"/>
</dbReference>
<dbReference type="GO" id="GO:0140096">
    <property type="term" value="F:catalytic activity, acting on a protein"/>
    <property type="evidence" value="ECO:0007669"/>
    <property type="project" value="UniProtKB-ARBA"/>
</dbReference>
<dbReference type="GO" id="GO:0046872">
    <property type="term" value="F:metal ion binding"/>
    <property type="evidence" value="ECO:0007669"/>
    <property type="project" value="UniProtKB-KW"/>
</dbReference>
<dbReference type="GO" id="GO:0004829">
    <property type="term" value="F:threonine-tRNA ligase activity"/>
    <property type="evidence" value="ECO:0007669"/>
    <property type="project" value="UniProtKB-UniRule"/>
</dbReference>
<dbReference type="GO" id="GO:0016740">
    <property type="term" value="F:transferase activity"/>
    <property type="evidence" value="ECO:0007669"/>
    <property type="project" value="UniProtKB-ARBA"/>
</dbReference>
<dbReference type="GO" id="GO:0000049">
    <property type="term" value="F:tRNA binding"/>
    <property type="evidence" value="ECO:0007669"/>
    <property type="project" value="UniProtKB-KW"/>
</dbReference>
<dbReference type="GO" id="GO:0006435">
    <property type="term" value="P:threonyl-tRNA aminoacylation"/>
    <property type="evidence" value="ECO:0007669"/>
    <property type="project" value="UniProtKB-UniRule"/>
</dbReference>
<dbReference type="CDD" id="cd01667">
    <property type="entry name" value="TGS_ThrRS"/>
    <property type="match status" value="1"/>
</dbReference>
<dbReference type="CDD" id="cd00860">
    <property type="entry name" value="ThrRS_anticodon"/>
    <property type="match status" value="1"/>
</dbReference>
<dbReference type="CDD" id="cd00771">
    <property type="entry name" value="ThrRS_core"/>
    <property type="match status" value="1"/>
</dbReference>
<dbReference type="FunFam" id="3.10.20.30:FF:000005">
    <property type="entry name" value="Threonine--tRNA ligase"/>
    <property type="match status" value="1"/>
</dbReference>
<dbReference type="FunFam" id="3.30.54.20:FF:000002">
    <property type="entry name" value="Threonine--tRNA ligase"/>
    <property type="match status" value="1"/>
</dbReference>
<dbReference type="FunFam" id="3.30.930.10:FF:000002">
    <property type="entry name" value="Threonine--tRNA ligase"/>
    <property type="match status" value="1"/>
</dbReference>
<dbReference type="FunFam" id="3.40.50.800:FF:000001">
    <property type="entry name" value="Threonine--tRNA ligase"/>
    <property type="match status" value="1"/>
</dbReference>
<dbReference type="FunFam" id="3.30.980.10:FF:000005">
    <property type="entry name" value="Threonyl-tRNA synthetase, mitochondrial"/>
    <property type="match status" value="1"/>
</dbReference>
<dbReference type="Gene3D" id="3.10.20.30">
    <property type="match status" value="1"/>
</dbReference>
<dbReference type="Gene3D" id="3.30.54.20">
    <property type="match status" value="1"/>
</dbReference>
<dbReference type="Gene3D" id="3.40.50.800">
    <property type="entry name" value="Anticodon-binding domain"/>
    <property type="match status" value="1"/>
</dbReference>
<dbReference type="Gene3D" id="3.30.930.10">
    <property type="entry name" value="Bira Bifunctional Protein, Domain 2"/>
    <property type="match status" value="1"/>
</dbReference>
<dbReference type="Gene3D" id="3.30.980.10">
    <property type="entry name" value="Threonyl-trna Synthetase, Chain A, domain 2"/>
    <property type="match status" value="1"/>
</dbReference>
<dbReference type="HAMAP" id="MF_00184">
    <property type="entry name" value="Thr_tRNA_synth"/>
    <property type="match status" value="1"/>
</dbReference>
<dbReference type="InterPro" id="IPR002314">
    <property type="entry name" value="aa-tRNA-synt_IIb"/>
</dbReference>
<dbReference type="InterPro" id="IPR006195">
    <property type="entry name" value="aa-tRNA-synth_II"/>
</dbReference>
<dbReference type="InterPro" id="IPR045864">
    <property type="entry name" value="aa-tRNA-synth_II/BPL/LPL"/>
</dbReference>
<dbReference type="InterPro" id="IPR004154">
    <property type="entry name" value="Anticodon-bd"/>
</dbReference>
<dbReference type="InterPro" id="IPR036621">
    <property type="entry name" value="Anticodon-bd_dom_sf"/>
</dbReference>
<dbReference type="InterPro" id="IPR012675">
    <property type="entry name" value="Beta-grasp_dom_sf"/>
</dbReference>
<dbReference type="InterPro" id="IPR004095">
    <property type="entry name" value="TGS"/>
</dbReference>
<dbReference type="InterPro" id="IPR012676">
    <property type="entry name" value="TGS-like"/>
</dbReference>
<dbReference type="InterPro" id="IPR002320">
    <property type="entry name" value="Thr-tRNA-ligase_IIa"/>
</dbReference>
<dbReference type="InterPro" id="IPR018163">
    <property type="entry name" value="Thr/Ala-tRNA-synth_IIc_edit"/>
</dbReference>
<dbReference type="InterPro" id="IPR047246">
    <property type="entry name" value="ThrRS_anticodon"/>
</dbReference>
<dbReference type="InterPro" id="IPR033728">
    <property type="entry name" value="ThrRS_core"/>
</dbReference>
<dbReference type="InterPro" id="IPR012947">
    <property type="entry name" value="tRNA_SAD"/>
</dbReference>
<dbReference type="NCBIfam" id="TIGR00418">
    <property type="entry name" value="thrS"/>
    <property type="match status" value="1"/>
</dbReference>
<dbReference type="PANTHER" id="PTHR11451:SF56">
    <property type="entry name" value="THREONINE--TRNA LIGASE 1"/>
    <property type="match status" value="1"/>
</dbReference>
<dbReference type="PANTHER" id="PTHR11451">
    <property type="entry name" value="THREONINE-TRNA LIGASE"/>
    <property type="match status" value="1"/>
</dbReference>
<dbReference type="Pfam" id="PF03129">
    <property type="entry name" value="HGTP_anticodon"/>
    <property type="match status" value="1"/>
</dbReference>
<dbReference type="Pfam" id="PF02824">
    <property type="entry name" value="TGS"/>
    <property type="match status" value="1"/>
</dbReference>
<dbReference type="Pfam" id="PF00587">
    <property type="entry name" value="tRNA-synt_2b"/>
    <property type="match status" value="1"/>
</dbReference>
<dbReference type="Pfam" id="PF07973">
    <property type="entry name" value="tRNA_SAD"/>
    <property type="match status" value="1"/>
</dbReference>
<dbReference type="PRINTS" id="PR01047">
    <property type="entry name" value="TRNASYNTHTHR"/>
</dbReference>
<dbReference type="SMART" id="SM00863">
    <property type="entry name" value="tRNA_SAD"/>
    <property type="match status" value="1"/>
</dbReference>
<dbReference type="SUPFAM" id="SSF52954">
    <property type="entry name" value="Class II aaRS ABD-related"/>
    <property type="match status" value="1"/>
</dbReference>
<dbReference type="SUPFAM" id="SSF55681">
    <property type="entry name" value="Class II aaRS and biotin synthetases"/>
    <property type="match status" value="1"/>
</dbReference>
<dbReference type="SUPFAM" id="SSF81271">
    <property type="entry name" value="TGS-like"/>
    <property type="match status" value="1"/>
</dbReference>
<dbReference type="SUPFAM" id="SSF55186">
    <property type="entry name" value="ThrRS/AlaRS common domain"/>
    <property type="match status" value="1"/>
</dbReference>
<dbReference type="PROSITE" id="PS50862">
    <property type="entry name" value="AA_TRNA_LIGASE_II"/>
    <property type="match status" value="1"/>
</dbReference>
<dbReference type="PROSITE" id="PS51880">
    <property type="entry name" value="TGS"/>
    <property type="match status" value="1"/>
</dbReference>
<protein>
    <recommendedName>
        <fullName evidence="1">Threonine--tRNA ligase</fullName>
        <ecNumber evidence="1">6.1.1.3</ecNumber>
    </recommendedName>
    <alternativeName>
        <fullName evidence="1">Threonyl-tRNA synthetase</fullName>
        <shortName evidence="1">ThrRS</shortName>
    </alternativeName>
</protein>
<keyword id="KW-0030">Aminoacyl-tRNA synthetase</keyword>
<keyword id="KW-0067">ATP-binding</keyword>
<keyword id="KW-0963">Cytoplasm</keyword>
<keyword id="KW-0436">Ligase</keyword>
<keyword id="KW-0479">Metal-binding</keyword>
<keyword id="KW-0547">Nucleotide-binding</keyword>
<keyword id="KW-0648">Protein biosynthesis</keyword>
<keyword id="KW-0694">RNA-binding</keyword>
<keyword id="KW-0820">tRNA-binding</keyword>
<keyword id="KW-0862">Zinc</keyword>
<name>SYT_STRP8</name>
<organism>
    <name type="scientific">Streptococcus pyogenes serotype M18 (strain MGAS8232)</name>
    <dbReference type="NCBI Taxonomy" id="186103"/>
    <lineage>
        <taxon>Bacteria</taxon>
        <taxon>Bacillati</taxon>
        <taxon>Bacillota</taxon>
        <taxon>Bacilli</taxon>
        <taxon>Lactobacillales</taxon>
        <taxon>Streptococcaceae</taxon>
        <taxon>Streptococcus</taxon>
    </lineage>
</organism>
<evidence type="ECO:0000255" key="1">
    <source>
        <dbReference type="HAMAP-Rule" id="MF_00184"/>
    </source>
</evidence>
<evidence type="ECO:0000255" key="2">
    <source>
        <dbReference type="PROSITE-ProRule" id="PRU01228"/>
    </source>
</evidence>